<gene>
    <name evidence="1" type="primary">def</name>
    <name type="synonym">def1</name>
    <name type="synonym">pdf1</name>
</gene>
<comment type="function">
    <text evidence="1">Removes the formyl group from the N-terminal Met of newly synthesized proteins. Requires at least a dipeptide for an efficient rate of reaction. N-terminal L-methionine is a prerequisite for activity but the enzyme has broad specificity at other positions.</text>
</comment>
<comment type="catalytic activity">
    <reaction evidence="1">
        <text>N-terminal N-formyl-L-methionyl-[peptide] + H2O = N-terminal L-methionyl-[peptide] + formate</text>
        <dbReference type="Rhea" id="RHEA:24420"/>
        <dbReference type="Rhea" id="RHEA-COMP:10639"/>
        <dbReference type="Rhea" id="RHEA-COMP:10640"/>
        <dbReference type="ChEBI" id="CHEBI:15377"/>
        <dbReference type="ChEBI" id="CHEBI:15740"/>
        <dbReference type="ChEBI" id="CHEBI:49298"/>
        <dbReference type="ChEBI" id="CHEBI:64731"/>
        <dbReference type="EC" id="3.5.1.88"/>
    </reaction>
</comment>
<comment type="cofactor">
    <cofactor evidence="1">
        <name>Fe(2+)</name>
        <dbReference type="ChEBI" id="CHEBI:29033"/>
    </cofactor>
    <text evidence="1">Binds 1 Fe(2+) ion.</text>
</comment>
<comment type="mass spectrometry"/>
<comment type="similarity">
    <text evidence="1">Belongs to the polypeptide deformylase family.</text>
</comment>
<organism>
    <name type="scientific">Staphylococcus aureus</name>
    <dbReference type="NCBI Taxonomy" id="1280"/>
    <lineage>
        <taxon>Bacteria</taxon>
        <taxon>Bacillati</taxon>
        <taxon>Bacillota</taxon>
        <taxon>Bacilli</taxon>
        <taxon>Bacillales</taxon>
        <taxon>Staphylococcaceae</taxon>
        <taxon>Staphylococcus</taxon>
    </lineage>
</organism>
<accession>P68826</accession>
<accession>Q9F4L4</accession>
<protein>
    <recommendedName>
        <fullName evidence="1">Peptide deformylase</fullName>
        <shortName evidence="1">PDF</shortName>
        <ecNumber evidence="1">3.5.1.88</ecNumber>
    </recommendedName>
    <alternativeName>
        <fullName evidence="1">Polypeptide deformylase</fullName>
    </alternativeName>
</protein>
<proteinExistence type="evidence at protein level"/>
<name>DEF_STAAU</name>
<sequence>MLTMKDIIRDGHPTLRQKAAELELPLTKEEKETLIAMREFLVNSQDEEIAKRYGLRSGVGLAAPQINISKRMIAVLIPDDGSGKSYDYMLVNPKIVSHSVQEAYLPTGEGCLSVDDNVAGLVHRHNRITIKAKDIEGNDIQLRLKGYPAIVFQHEIDHLNGVMFYDHIDKNHPLQPHTDAVEV</sequence>
<reference key="1">
    <citation type="submission" date="2000-08" db="EMBL/GenBank/DDBJ databases">
        <title>Staphylococcus aureus deformylase 1 encoding DNA.</title>
        <authorList>
            <person name="Lonetto M.A."/>
            <person name="Sylvester D.R."/>
            <person name="Warren R.L."/>
        </authorList>
    </citation>
    <scope>NUCLEOTIDE SEQUENCE [GENOMIC DNA]</scope>
    <source>
        <strain>WCUH29 / NCIMB 40771</strain>
    </source>
</reference>
<reference key="2">
    <citation type="journal article" date="2006" name="Infect. Immun.">
        <title>Identification of Staphylococcus aureus proteins recognized by the antibody-mediated immune response to a biofilm infection.</title>
        <authorList>
            <person name="Brady R.A."/>
            <person name="Leid J.G."/>
            <person name="Camper A.K."/>
            <person name="Costerton J.W."/>
            <person name="Shirtliff M.E."/>
        </authorList>
    </citation>
    <scope>MASS SPECTROMETRY</scope>
    <source>
        <strain>MRSA-M2</strain>
    </source>
</reference>
<reference key="3">
    <citation type="journal article" date="2003" name="J. Mol. Biol.">
        <title>Structure analysis of peptide deformylases from Streptococcus pneumoniae, Staphylococcus aureus, Thermotoga maritima and Pseudomonas aeruginosa: snapshots of the oxygen sensitivity of peptide deformylase.</title>
        <authorList>
            <person name="Kreusch A."/>
            <person name="Spraggon G."/>
            <person name="Lee C.C."/>
            <person name="Klock H."/>
            <person name="McMullan D."/>
            <person name="Ng K."/>
            <person name="Shin T."/>
            <person name="Vincent J."/>
            <person name="Warner I."/>
            <person name="Ericson C."/>
            <person name="Lesley S.A."/>
        </authorList>
    </citation>
    <scope>X-RAY CRYSTALLOGRAPHY (1.45 ANGSTROMS)</scope>
</reference>
<evidence type="ECO:0000255" key="1">
    <source>
        <dbReference type="HAMAP-Rule" id="MF_00163"/>
    </source>
</evidence>
<evidence type="ECO:0000269" key="2">
    <source>
    </source>
</evidence>
<evidence type="ECO:0007829" key="3">
    <source>
        <dbReference type="PDB" id="1LM4"/>
    </source>
</evidence>
<feature type="chain" id="PRO_0000082843" description="Peptide deformylase">
    <location>
        <begin position="1"/>
        <end position="183"/>
    </location>
</feature>
<feature type="active site" evidence="1">
    <location>
        <position position="155"/>
    </location>
</feature>
<feature type="binding site" evidence="1">
    <location>
        <position position="111"/>
    </location>
    <ligand>
        <name>Fe cation</name>
        <dbReference type="ChEBI" id="CHEBI:24875"/>
    </ligand>
</feature>
<feature type="binding site" evidence="1">
    <location>
        <position position="154"/>
    </location>
    <ligand>
        <name>Fe cation</name>
        <dbReference type="ChEBI" id="CHEBI:24875"/>
    </ligand>
</feature>
<feature type="binding site" evidence="1">
    <location>
        <position position="158"/>
    </location>
    <ligand>
        <name>Fe cation</name>
        <dbReference type="ChEBI" id="CHEBI:24875"/>
    </ligand>
</feature>
<feature type="helix" evidence="3">
    <location>
        <begin position="4"/>
        <end position="6"/>
    </location>
</feature>
<feature type="helix" evidence="3">
    <location>
        <begin position="13"/>
        <end position="16"/>
    </location>
</feature>
<feature type="helix" evidence="3">
    <location>
        <begin position="28"/>
        <end position="45"/>
    </location>
</feature>
<feature type="helix" evidence="3">
    <location>
        <begin position="47"/>
        <end position="53"/>
    </location>
</feature>
<feature type="strand" evidence="3">
    <location>
        <begin position="58"/>
        <end position="62"/>
    </location>
</feature>
<feature type="helix" evidence="3">
    <location>
        <begin position="63"/>
        <end position="66"/>
    </location>
</feature>
<feature type="strand" evidence="3">
    <location>
        <begin position="70"/>
        <end position="77"/>
    </location>
</feature>
<feature type="strand" evidence="3">
    <location>
        <begin position="81"/>
        <end position="83"/>
    </location>
</feature>
<feature type="strand" evidence="3">
    <location>
        <begin position="86"/>
        <end position="98"/>
    </location>
</feature>
<feature type="strand" evidence="3">
    <location>
        <begin position="100"/>
        <end position="104"/>
    </location>
</feature>
<feature type="strand" evidence="3">
    <location>
        <begin position="124"/>
        <end position="133"/>
    </location>
</feature>
<feature type="strand" evidence="3">
    <location>
        <begin position="139"/>
        <end position="145"/>
    </location>
</feature>
<feature type="helix" evidence="3">
    <location>
        <begin position="146"/>
        <end position="159"/>
    </location>
</feature>
<feature type="helix" evidence="3">
    <location>
        <begin position="164"/>
        <end position="167"/>
    </location>
</feature>
<feature type="strand" evidence="3">
    <location>
        <begin position="170"/>
        <end position="172"/>
    </location>
</feature>
<dbReference type="EC" id="3.5.1.88" evidence="1"/>
<dbReference type="EMBL" id="AY007227">
    <property type="protein sequence ID" value="AAG02249.1"/>
    <property type="molecule type" value="Genomic_DNA"/>
</dbReference>
<dbReference type="RefSeq" id="WP_000957037.1">
    <property type="nucleotide sequence ID" value="NZ_WYDB01000003.1"/>
</dbReference>
<dbReference type="PDB" id="1LM4">
    <property type="method" value="X-ray"/>
    <property type="resolution" value="1.45 A"/>
    <property type="chains" value="A/B=1-183"/>
</dbReference>
<dbReference type="PDB" id="1LMH">
    <property type="method" value="X-ray"/>
    <property type="resolution" value="1.90 A"/>
    <property type="chains" value="A=1-183"/>
</dbReference>
<dbReference type="PDB" id="1LQW">
    <property type="method" value="X-ray"/>
    <property type="resolution" value="1.87 A"/>
    <property type="chains" value="A/B=1-183"/>
</dbReference>
<dbReference type="PDB" id="1Q1Y">
    <property type="method" value="X-ray"/>
    <property type="resolution" value="1.90 A"/>
    <property type="chains" value="A=1-183"/>
</dbReference>
<dbReference type="PDB" id="2AI9">
    <property type="method" value="X-ray"/>
    <property type="resolution" value="2.50 A"/>
    <property type="chains" value="A/B=1-183"/>
</dbReference>
<dbReference type="PDB" id="6JFG">
    <property type="method" value="X-ray"/>
    <property type="resolution" value="2.60 A"/>
    <property type="chains" value="A=1-183"/>
</dbReference>
<dbReference type="PDB" id="6JFO">
    <property type="method" value="X-ray"/>
    <property type="resolution" value="1.60 A"/>
    <property type="chains" value="A=1-183"/>
</dbReference>
<dbReference type="PDB" id="6JFQ">
    <property type="method" value="X-ray"/>
    <property type="resolution" value="2.20 A"/>
    <property type="chains" value="A=1-183"/>
</dbReference>
<dbReference type="PDB" id="6JFR">
    <property type="method" value="X-ray"/>
    <property type="resolution" value="2.40 A"/>
    <property type="chains" value="A=1-183"/>
</dbReference>
<dbReference type="PDB" id="6JFS">
    <property type="method" value="X-ray"/>
    <property type="resolution" value="2.25 A"/>
    <property type="chains" value="A=1-183"/>
</dbReference>
<dbReference type="PDBsum" id="1LM4"/>
<dbReference type="PDBsum" id="1LMH"/>
<dbReference type="PDBsum" id="1LQW"/>
<dbReference type="PDBsum" id="1Q1Y"/>
<dbReference type="PDBsum" id="2AI9"/>
<dbReference type="PDBsum" id="6JFG"/>
<dbReference type="PDBsum" id="6JFO"/>
<dbReference type="PDBsum" id="6JFQ"/>
<dbReference type="PDBsum" id="6JFR"/>
<dbReference type="PDBsum" id="6JFS"/>
<dbReference type="BMRB" id="P68826"/>
<dbReference type="SMR" id="P68826"/>
<dbReference type="BindingDB" id="P68826"/>
<dbReference type="ChEMBL" id="CHEMBL2010635"/>
<dbReference type="DrugBank" id="DB08524">
    <property type="generic name" value="2-(3-BENZOYLPHENOXY)ETHYL(HYDROXY)FORMAMIDE"/>
</dbReference>
<dbReference type="DrugBank" id="DB04310">
    <property type="generic name" value="2-[(Formyl-Hydroxy-Amino)-Methyl]-Heptanoic Acid [1-(2-Hydroxymethyl-Pyrrolidine-1-Carbonyl)-2-Methyl-Propyl]-Amide"/>
</dbReference>
<dbReference type="DrugBank" id="DB02153">
    <property type="generic name" value="3-sulfino-L-alanine"/>
</dbReference>
<dbReference type="DrugBank" id="DB08523">
    <property type="generic name" value="[HYDROXY(3-PHENYLPROPYL)AMINO]METHANOL"/>
</dbReference>
<dbReference type="DrugBank" id="DB04368">
    <property type="generic name" value="Bb-3497"/>
</dbReference>
<dbReference type="DrugBank" id="DB01942">
    <property type="generic name" value="Formic acid"/>
</dbReference>
<dbReference type="DrugBank" id="DB08525">
    <property type="generic name" value="HYDROXY[3-(6-METHYLPYRIDIN-2-YL)PROPYL]FORMAMIDE"/>
</dbReference>
<dbReference type="DrugBank" id="DB03661">
    <property type="generic name" value="L-cysteic acid"/>
</dbReference>
<dbReference type="DrugBank" id="DB11912">
    <property type="generic name" value="Lanopepden"/>
</dbReference>
<dbReference type="DrugBank" id="DB02810">
    <property type="generic name" value="N-(2-Acetamido)Iminodiacetic Acid"/>
</dbReference>
<dbReference type="OMA" id="HLYYDHI"/>
<dbReference type="BRENDA" id="3.5.1.88">
    <property type="organism ID" value="3352"/>
</dbReference>
<dbReference type="EvolutionaryTrace" id="P68826"/>
<dbReference type="GO" id="GO:0046872">
    <property type="term" value="F:metal ion binding"/>
    <property type="evidence" value="ECO:0007669"/>
    <property type="project" value="UniProtKB-KW"/>
</dbReference>
<dbReference type="GO" id="GO:0042586">
    <property type="term" value="F:peptide deformylase activity"/>
    <property type="evidence" value="ECO:0007669"/>
    <property type="project" value="UniProtKB-UniRule"/>
</dbReference>
<dbReference type="GO" id="GO:0043686">
    <property type="term" value="P:co-translational protein modification"/>
    <property type="evidence" value="ECO:0007669"/>
    <property type="project" value="TreeGrafter"/>
</dbReference>
<dbReference type="GO" id="GO:0006412">
    <property type="term" value="P:translation"/>
    <property type="evidence" value="ECO:0007669"/>
    <property type="project" value="UniProtKB-UniRule"/>
</dbReference>
<dbReference type="CDD" id="cd00487">
    <property type="entry name" value="Pep_deformylase"/>
    <property type="match status" value="1"/>
</dbReference>
<dbReference type="FunFam" id="3.90.45.10:FF:000002">
    <property type="entry name" value="Peptide deformylase"/>
    <property type="match status" value="1"/>
</dbReference>
<dbReference type="Gene3D" id="3.90.45.10">
    <property type="entry name" value="Peptide deformylase"/>
    <property type="match status" value="1"/>
</dbReference>
<dbReference type="HAMAP" id="MF_00163">
    <property type="entry name" value="Pep_deformylase"/>
    <property type="match status" value="1"/>
</dbReference>
<dbReference type="InterPro" id="IPR023635">
    <property type="entry name" value="Peptide_deformylase"/>
</dbReference>
<dbReference type="InterPro" id="IPR036821">
    <property type="entry name" value="Peptide_deformylase_sf"/>
</dbReference>
<dbReference type="NCBIfam" id="TIGR00079">
    <property type="entry name" value="pept_deformyl"/>
    <property type="match status" value="1"/>
</dbReference>
<dbReference type="PANTHER" id="PTHR10458">
    <property type="entry name" value="PEPTIDE DEFORMYLASE"/>
    <property type="match status" value="1"/>
</dbReference>
<dbReference type="PANTHER" id="PTHR10458:SF8">
    <property type="entry name" value="PEPTIDE DEFORMYLASE 2"/>
    <property type="match status" value="1"/>
</dbReference>
<dbReference type="Pfam" id="PF01327">
    <property type="entry name" value="Pep_deformylase"/>
    <property type="match status" value="1"/>
</dbReference>
<dbReference type="PIRSF" id="PIRSF004749">
    <property type="entry name" value="Pep_def"/>
    <property type="match status" value="1"/>
</dbReference>
<dbReference type="PRINTS" id="PR01576">
    <property type="entry name" value="PDEFORMYLASE"/>
</dbReference>
<dbReference type="SUPFAM" id="SSF56420">
    <property type="entry name" value="Peptide deformylase"/>
    <property type="match status" value="1"/>
</dbReference>
<keyword id="KW-0002">3D-structure</keyword>
<keyword id="KW-0378">Hydrolase</keyword>
<keyword id="KW-0408">Iron</keyword>
<keyword id="KW-0479">Metal-binding</keyword>
<keyword id="KW-0648">Protein biosynthesis</keyword>